<sequence length="348" mass="39135">MRKMSEEEFYLFKNISSVGPWDGPQYHIAPVWAFYLQAAFMGTVFLIGFPLNAMVLVATLRYKKLRQPLNYILVNVSFGGFLLCIFSVFPVFVASCNGYFVFGRHVCALEGFLGTVAGLVTGWSLAFLAFERYIVICKPFGNFRFSSKHALTVVLATWTIGIGVSIPPFFGWSRFIPEGLQCSCGPDWYTVGTKYRSESYTWFLFIFCFIVPLSLICFSYTQLLRALKAVAAQQQESATTQKAEREVSRMVVVMVGSFCVCYVPYAAFAMYMVNNRNHGLDLRLVTIPSFFSKSACIYNPIIYCFMNKQFQACIMKMVCGKAMTDESDTCSSQKTEVSTVSSTQVGPN</sequence>
<evidence type="ECO:0000250" key="1"/>
<evidence type="ECO:0000250" key="2">
    <source>
        <dbReference type="UniProtKB" id="P03999"/>
    </source>
</evidence>
<evidence type="ECO:0000250" key="3">
    <source>
        <dbReference type="UniProtKB" id="P51491"/>
    </source>
</evidence>
<evidence type="ECO:0000255" key="4"/>
<evidence type="ECO:0000255" key="5">
    <source>
        <dbReference type="PROSITE-ProRule" id="PRU00521"/>
    </source>
</evidence>
<feature type="chain" id="PRO_0000197764" description="Short-wave-sensitive opsin 1">
    <location>
        <begin position="1"/>
        <end position="348"/>
    </location>
</feature>
<feature type="topological domain" description="Extracellular" evidence="4">
    <location>
        <begin position="1"/>
        <end position="33"/>
    </location>
</feature>
<feature type="transmembrane region" description="Helical; Name=1" evidence="4">
    <location>
        <begin position="34"/>
        <end position="58"/>
    </location>
</feature>
<feature type="topological domain" description="Cytoplasmic" evidence="4">
    <location>
        <begin position="59"/>
        <end position="70"/>
    </location>
</feature>
<feature type="transmembrane region" description="Helical; Name=2" evidence="4">
    <location>
        <begin position="71"/>
        <end position="96"/>
    </location>
</feature>
<feature type="topological domain" description="Extracellular" evidence="4">
    <location>
        <begin position="97"/>
        <end position="110"/>
    </location>
</feature>
<feature type="transmembrane region" description="Helical; Name=3" evidence="4">
    <location>
        <begin position="111"/>
        <end position="130"/>
    </location>
</feature>
<feature type="topological domain" description="Cytoplasmic" evidence="4">
    <location>
        <begin position="131"/>
        <end position="149"/>
    </location>
</feature>
<feature type="transmembrane region" description="Helical; Name=4" evidence="4">
    <location>
        <begin position="150"/>
        <end position="173"/>
    </location>
</feature>
<feature type="topological domain" description="Extracellular" evidence="4">
    <location>
        <begin position="174"/>
        <end position="199"/>
    </location>
</feature>
<feature type="transmembrane region" description="Helical; Name=5" evidence="4">
    <location>
        <begin position="200"/>
        <end position="227"/>
    </location>
</feature>
<feature type="topological domain" description="Cytoplasmic" evidence="4">
    <location>
        <begin position="228"/>
        <end position="249"/>
    </location>
</feature>
<feature type="transmembrane region" description="Helical; Name=6" evidence="4">
    <location>
        <begin position="250"/>
        <end position="273"/>
    </location>
</feature>
<feature type="topological domain" description="Extracellular" evidence="4">
    <location>
        <begin position="274"/>
        <end position="281"/>
    </location>
</feature>
<feature type="transmembrane region" description="Helical; Name=7" evidence="4">
    <location>
        <begin position="282"/>
        <end position="306"/>
    </location>
</feature>
<feature type="topological domain" description="Cytoplasmic" evidence="4">
    <location>
        <begin position="307"/>
        <end position="348"/>
    </location>
</feature>
<feature type="modified residue" description="N6-(retinylidene)lysine" evidence="1">
    <location>
        <position position="293"/>
    </location>
</feature>
<feature type="glycosylation site" description="N-linked (GlcNAc...) asparagine" evidence="4">
    <location>
        <position position="14"/>
    </location>
</feature>
<feature type="disulfide bond" evidence="5">
    <location>
        <begin position="107"/>
        <end position="184"/>
    </location>
</feature>
<organism>
    <name type="scientific">Pan troglodytes</name>
    <name type="common">Chimpanzee</name>
    <dbReference type="NCBI Taxonomy" id="9598"/>
    <lineage>
        <taxon>Eukaryota</taxon>
        <taxon>Metazoa</taxon>
        <taxon>Chordata</taxon>
        <taxon>Craniata</taxon>
        <taxon>Vertebrata</taxon>
        <taxon>Euteleostomi</taxon>
        <taxon>Mammalia</taxon>
        <taxon>Eutheria</taxon>
        <taxon>Euarchontoglires</taxon>
        <taxon>Primates</taxon>
        <taxon>Haplorrhini</taxon>
        <taxon>Catarrhini</taxon>
        <taxon>Hominidae</taxon>
        <taxon>Pan</taxon>
    </lineage>
</organism>
<reference key="1">
    <citation type="journal article" date="1998" name="Mol. Biol. Evol.">
        <title>Contrasting levels of DNA polymorphism at the autosomal and X-linked visual color pigment loci in humans and squirrel monkeys.</title>
        <authorList>
            <person name="Shimmin L.C."/>
            <person name="Miller J."/>
            <person name="Tran H.N."/>
            <person name="Li W.H."/>
        </authorList>
    </citation>
    <scope>NUCLEOTIDE SEQUENCE [GENOMIC DNA]</scope>
</reference>
<comment type="function">
    <text evidence="2 3">Visual pigments are the light-absorbing molecules that mediate vision. They consist of an apoprotein, opsin, covalently linked to cis-retinal (By similarity). Required for the maintenance of cone outer segment organization in the ventral retina, but not essential for the maintenance of functioning cone photoreceptors (By similarity). Involved in ensuring correct abundance and localization of retinal membrane proteins (By similarity). May increase spectral sensitivity in dim light (By similarity).</text>
</comment>
<comment type="subcellular location">
    <subcellularLocation>
        <location evidence="2">Cell membrane</location>
        <topology evidence="4">Multi-pass membrane protein</topology>
    </subcellularLocation>
    <subcellularLocation>
        <location evidence="3">Photoreceptor inner segment</location>
    </subcellularLocation>
    <subcellularLocation>
        <location evidence="3">Cell projection</location>
        <location evidence="3">Cilium</location>
        <location evidence="3">Photoreceptor outer segment</location>
    </subcellularLocation>
    <subcellularLocation>
        <location evidence="2">Cytoplasm</location>
        <location evidence="2">Perinuclear region</location>
    </subcellularLocation>
</comment>
<comment type="PTM">
    <text evidence="1">Phosphorylated on some or all of the serine and threonine residues present in the C-terminal region.</text>
</comment>
<comment type="similarity">
    <text evidence="5">Belongs to the G-protein coupled receptor 1 family. Opsin subfamily.</text>
</comment>
<accession>P60015</accession>
<keyword id="KW-1003">Cell membrane</keyword>
<keyword id="KW-0966">Cell projection</keyword>
<keyword id="KW-0157">Chromophore</keyword>
<keyword id="KW-0963">Cytoplasm</keyword>
<keyword id="KW-1015">Disulfide bond</keyword>
<keyword id="KW-0297">G-protein coupled receptor</keyword>
<keyword id="KW-0325">Glycoprotein</keyword>
<keyword id="KW-0472">Membrane</keyword>
<keyword id="KW-0597">Phosphoprotein</keyword>
<keyword id="KW-0600">Photoreceptor protein</keyword>
<keyword id="KW-0675">Receptor</keyword>
<keyword id="KW-1185">Reference proteome</keyword>
<keyword id="KW-0681">Retinal protein</keyword>
<keyword id="KW-0716">Sensory transduction</keyword>
<keyword id="KW-0807">Transducer</keyword>
<keyword id="KW-0812">Transmembrane</keyword>
<keyword id="KW-1133">Transmembrane helix</keyword>
<keyword id="KW-0844">Vision</keyword>
<gene>
    <name type="primary">OPN1SW</name>
    <name type="synonym">BCP</name>
</gene>
<name>OPSB_PANTR</name>
<protein>
    <recommendedName>
        <fullName>Short-wave-sensitive opsin 1</fullName>
    </recommendedName>
    <alternativeName>
        <fullName>Blue cone photoreceptor pigment</fullName>
    </alternativeName>
    <alternativeName>
        <fullName>Blue-sensitive opsin</fullName>
        <shortName>BOP</shortName>
    </alternativeName>
</protein>
<proteinExistence type="inferred from homology"/>
<dbReference type="EMBL" id="AF039435">
    <property type="protein sequence ID" value="AAB95490.1"/>
    <property type="molecule type" value="Genomic_DNA"/>
</dbReference>
<dbReference type="EMBL" id="AF039433">
    <property type="protein sequence ID" value="AAB95490.1"/>
    <property type="status" value="JOINED"/>
    <property type="molecule type" value="Genomic_DNA"/>
</dbReference>
<dbReference type="EMBL" id="AF039434">
    <property type="protein sequence ID" value="AAB95490.1"/>
    <property type="status" value="JOINED"/>
    <property type="molecule type" value="Genomic_DNA"/>
</dbReference>
<dbReference type="RefSeq" id="NP_001009127.1">
    <property type="nucleotide sequence ID" value="NM_001009127.1"/>
</dbReference>
<dbReference type="SMR" id="P60015"/>
<dbReference type="FunCoup" id="P60015">
    <property type="interactions" value="297"/>
</dbReference>
<dbReference type="STRING" id="9598.ENSPTRP00000033678"/>
<dbReference type="GlyCosmos" id="P60015">
    <property type="glycosylation" value="1 site, No reported glycans"/>
</dbReference>
<dbReference type="PaxDb" id="9598-ENSPTRP00000033678"/>
<dbReference type="Ensembl" id="ENSPTRT00000036429.3">
    <property type="protein sequence ID" value="ENSPTRP00000033678.2"/>
    <property type="gene ID" value="ENSPTRG00000019669.3"/>
</dbReference>
<dbReference type="GeneID" id="472508"/>
<dbReference type="KEGG" id="ptr:472508"/>
<dbReference type="CTD" id="611"/>
<dbReference type="VGNC" id="VGNC:8710">
    <property type="gene designation" value="OPN1SW"/>
</dbReference>
<dbReference type="eggNOG" id="KOG3656">
    <property type="taxonomic scope" value="Eukaryota"/>
</dbReference>
<dbReference type="GeneTree" id="ENSGT01030000234549"/>
<dbReference type="HOGENOM" id="CLU_009579_3_0_1"/>
<dbReference type="InParanoid" id="P60015"/>
<dbReference type="OMA" id="QTAFMGF"/>
<dbReference type="OrthoDB" id="2933at9604"/>
<dbReference type="TreeFam" id="TF324998"/>
<dbReference type="Proteomes" id="UP000002277">
    <property type="component" value="Chromosome 7"/>
</dbReference>
<dbReference type="Bgee" id="ENSPTRG00000019669">
    <property type="expression patterns" value="Expressed in fibroblast and 19 other cell types or tissues"/>
</dbReference>
<dbReference type="GO" id="GO:0120199">
    <property type="term" value="C:cone photoreceptor outer segment"/>
    <property type="evidence" value="ECO:0007669"/>
    <property type="project" value="Ensembl"/>
</dbReference>
<dbReference type="GO" id="GO:0048471">
    <property type="term" value="C:perinuclear region of cytoplasm"/>
    <property type="evidence" value="ECO:0000250"/>
    <property type="project" value="UniProtKB"/>
</dbReference>
<dbReference type="GO" id="GO:0097381">
    <property type="term" value="C:photoreceptor disc membrane"/>
    <property type="evidence" value="ECO:0007669"/>
    <property type="project" value="UniProtKB-ARBA"/>
</dbReference>
<dbReference type="GO" id="GO:0001917">
    <property type="term" value="C:photoreceptor inner segment"/>
    <property type="evidence" value="ECO:0007669"/>
    <property type="project" value="UniProtKB-SubCell"/>
</dbReference>
<dbReference type="GO" id="GO:0001750">
    <property type="term" value="C:photoreceptor outer segment"/>
    <property type="evidence" value="ECO:0000318"/>
    <property type="project" value="GO_Central"/>
</dbReference>
<dbReference type="GO" id="GO:0005886">
    <property type="term" value="C:plasma membrane"/>
    <property type="evidence" value="ECO:0000250"/>
    <property type="project" value="UniProtKB"/>
</dbReference>
<dbReference type="GO" id="GO:0008020">
    <property type="term" value="F:G protein-coupled photoreceptor activity"/>
    <property type="evidence" value="ECO:0000318"/>
    <property type="project" value="GO_Central"/>
</dbReference>
<dbReference type="GO" id="GO:0071482">
    <property type="term" value="P:cellular response to light stimulus"/>
    <property type="evidence" value="ECO:0000318"/>
    <property type="project" value="GO_Central"/>
</dbReference>
<dbReference type="GO" id="GO:0071492">
    <property type="term" value="P:cellular response to UV-A"/>
    <property type="evidence" value="ECO:0000250"/>
    <property type="project" value="UniProtKB"/>
</dbReference>
<dbReference type="GO" id="GO:0007186">
    <property type="term" value="P:G protein-coupled receptor signaling pathway"/>
    <property type="evidence" value="ECO:0000318"/>
    <property type="project" value="GO_Central"/>
</dbReference>
<dbReference type="GO" id="GO:0007602">
    <property type="term" value="P:phototransduction"/>
    <property type="evidence" value="ECO:0000318"/>
    <property type="project" value="GO_Central"/>
</dbReference>
<dbReference type="GO" id="GO:0007601">
    <property type="term" value="P:visual perception"/>
    <property type="evidence" value="ECO:0007669"/>
    <property type="project" value="UniProtKB-KW"/>
</dbReference>
<dbReference type="CDD" id="cd15076">
    <property type="entry name" value="7tmA_SWS1_opsin"/>
    <property type="match status" value="1"/>
</dbReference>
<dbReference type="FunFam" id="1.20.1070.10:FF:000018">
    <property type="entry name" value="Rhodopsin"/>
    <property type="match status" value="1"/>
</dbReference>
<dbReference type="Gene3D" id="1.20.1070.10">
    <property type="entry name" value="Rhodopsin 7-helix transmembrane proteins"/>
    <property type="match status" value="1"/>
</dbReference>
<dbReference type="InterPro" id="IPR050125">
    <property type="entry name" value="GPCR_opsins"/>
</dbReference>
<dbReference type="InterPro" id="IPR000276">
    <property type="entry name" value="GPCR_Rhodpsn"/>
</dbReference>
<dbReference type="InterPro" id="IPR017452">
    <property type="entry name" value="GPCR_Rhodpsn_7TM"/>
</dbReference>
<dbReference type="InterPro" id="IPR001760">
    <property type="entry name" value="Opsin"/>
</dbReference>
<dbReference type="InterPro" id="IPR001521">
    <property type="entry name" value="Opsin_blue"/>
</dbReference>
<dbReference type="InterPro" id="IPR027430">
    <property type="entry name" value="Retinal_BS"/>
</dbReference>
<dbReference type="PANTHER" id="PTHR24240">
    <property type="entry name" value="OPSIN"/>
    <property type="match status" value="1"/>
</dbReference>
<dbReference type="Pfam" id="PF00001">
    <property type="entry name" value="7tm_1"/>
    <property type="match status" value="1"/>
</dbReference>
<dbReference type="PRINTS" id="PR00237">
    <property type="entry name" value="GPCRRHODOPSN"/>
</dbReference>
<dbReference type="PRINTS" id="PR00238">
    <property type="entry name" value="OPSIN"/>
</dbReference>
<dbReference type="PRINTS" id="PR00574">
    <property type="entry name" value="OPSINBLUE"/>
</dbReference>
<dbReference type="SUPFAM" id="SSF81321">
    <property type="entry name" value="Family A G protein-coupled receptor-like"/>
    <property type="match status" value="1"/>
</dbReference>
<dbReference type="PROSITE" id="PS00237">
    <property type="entry name" value="G_PROTEIN_RECEP_F1_1"/>
    <property type="match status" value="1"/>
</dbReference>
<dbReference type="PROSITE" id="PS50262">
    <property type="entry name" value="G_PROTEIN_RECEP_F1_2"/>
    <property type="match status" value="1"/>
</dbReference>
<dbReference type="PROSITE" id="PS00238">
    <property type="entry name" value="OPSIN"/>
    <property type="match status" value="1"/>
</dbReference>